<evidence type="ECO:0000255" key="1">
    <source>
        <dbReference type="HAMAP-Rule" id="MF_01588"/>
    </source>
</evidence>
<evidence type="ECO:0000256" key="2">
    <source>
        <dbReference type="SAM" id="MobiDB-lite"/>
    </source>
</evidence>
<reference key="1">
    <citation type="journal article" date="2008" name="J. Bacteriol.">
        <title>Genome of the actinomycete plant pathogen Clavibacter michiganensis subsp. sepedonicus suggests recent niche adaptation.</title>
        <authorList>
            <person name="Bentley S.D."/>
            <person name="Corton C."/>
            <person name="Brown S.E."/>
            <person name="Barron A."/>
            <person name="Clark L."/>
            <person name="Doggett J."/>
            <person name="Harris B."/>
            <person name="Ormond D."/>
            <person name="Quail M.A."/>
            <person name="May G."/>
            <person name="Francis D."/>
            <person name="Knudson D."/>
            <person name="Parkhill J."/>
            <person name="Ishimaru C.A."/>
        </authorList>
    </citation>
    <scope>NUCLEOTIDE SEQUENCE [LARGE SCALE GENOMIC DNA]</scope>
    <source>
        <strain>ATCC 33113 / DSM 20744 / JCM 9667 / LMG 2889 / ICMP 2535 / C-1</strain>
    </source>
</reference>
<keyword id="KW-0227">DNA damage</keyword>
<keyword id="KW-0234">DNA repair</keyword>
<keyword id="KW-0235">DNA replication</keyword>
<keyword id="KW-0436">Ligase</keyword>
<keyword id="KW-0460">Magnesium</keyword>
<keyword id="KW-0464">Manganese</keyword>
<keyword id="KW-0479">Metal-binding</keyword>
<keyword id="KW-0520">NAD</keyword>
<keyword id="KW-0862">Zinc</keyword>
<feature type="chain" id="PRO_0000340338" description="DNA ligase">
    <location>
        <begin position="1"/>
        <end position="847"/>
    </location>
</feature>
<feature type="domain" description="BRCT" evidence="1">
    <location>
        <begin position="686"/>
        <end position="775"/>
    </location>
</feature>
<feature type="region of interest" description="Disordered" evidence="2">
    <location>
        <begin position="1"/>
        <end position="23"/>
    </location>
</feature>
<feature type="region of interest" description="Disordered" evidence="2">
    <location>
        <begin position="770"/>
        <end position="847"/>
    </location>
</feature>
<feature type="compositionally biased region" description="Low complexity" evidence="2">
    <location>
        <begin position="1"/>
        <end position="22"/>
    </location>
</feature>
<feature type="compositionally biased region" description="Low complexity" evidence="2">
    <location>
        <begin position="786"/>
        <end position="807"/>
    </location>
</feature>
<feature type="compositionally biased region" description="Low complexity" evidence="2">
    <location>
        <begin position="819"/>
        <end position="833"/>
    </location>
</feature>
<feature type="active site" description="N6-AMP-lysine intermediate" evidence="1">
    <location>
        <position position="137"/>
    </location>
</feature>
<feature type="binding site" evidence="1">
    <location>
        <begin position="54"/>
        <end position="58"/>
    </location>
    <ligand>
        <name>NAD(+)</name>
        <dbReference type="ChEBI" id="CHEBI:57540"/>
    </ligand>
</feature>
<feature type="binding site" evidence="1">
    <location>
        <begin position="104"/>
        <end position="105"/>
    </location>
    <ligand>
        <name>NAD(+)</name>
        <dbReference type="ChEBI" id="CHEBI:57540"/>
    </ligand>
</feature>
<feature type="binding site" evidence="1">
    <location>
        <position position="135"/>
    </location>
    <ligand>
        <name>NAD(+)</name>
        <dbReference type="ChEBI" id="CHEBI:57540"/>
    </ligand>
</feature>
<feature type="binding site" evidence="1">
    <location>
        <position position="158"/>
    </location>
    <ligand>
        <name>NAD(+)</name>
        <dbReference type="ChEBI" id="CHEBI:57540"/>
    </ligand>
</feature>
<feature type="binding site" evidence="1">
    <location>
        <position position="195"/>
    </location>
    <ligand>
        <name>NAD(+)</name>
        <dbReference type="ChEBI" id="CHEBI:57540"/>
    </ligand>
</feature>
<feature type="binding site" evidence="1">
    <location>
        <position position="326"/>
    </location>
    <ligand>
        <name>NAD(+)</name>
        <dbReference type="ChEBI" id="CHEBI:57540"/>
    </ligand>
</feature>
<feature type="binding site" evidence="1">
    <location>
        <position position="350"/>
    </location>
    <ligand>
        <name>NAD(+)</name>
        <dbReference type="ChEBI" id="CHEBI:57540"/>
    </ligand>
</feature>
<feature type="binding site" evidence="1">
    <location>
        <position position="444"/>
    </location>
    <ligand>
        <name>Zn(2+)</name>
        <dbReference type="ChEBI" id="CHEBI:29105"/>
    </ligand>
</feature>
<feature type="binding site" evidence="1">
    <location>
        <position position="447"/>
    </location>
    <ligand>
        <name>Zn(2+)</name>
        <dbReference type="ChEBI" id="CHEBI:29105"/>
    </ligand>
</feature>
<feature type="binding site" evidence="1">
    <location>
        <position position="463"/>
    </location>
    <ligand>
        <name>Zn(2+)</name>
        <dbReference type="ChEBI" id="CHEBI:29105"/>
    </ligand>
</feature>
<feature type="binding site" evidence="1">
    <location>
        <position position="469"/>
    </location>
    <ligand>
        <name>Zn(2+)</name>
        <dbReference type="ChEBI" id="CHEBI:29105"/>
    </ligand>
</feature>
<comment type="function">
    <text evidence="1">DNA ligase that catalyzes the formation of phosphodiester linkages between 5'-phosphoryl and 3'-hydroxyl groups in double-stranded DNA using NAD as a coenzyme and as the energy source for the reaction. It is essential for DNA replication and repair of damaged DNA.</text>
</comment>
<comment type="catalytic activity">
    <reaction evidence="1">
        <text>NAD(+) + (deoxyribonucleotide)n-3'-hydroxyl + 5'-phospho-(deoxyribonucleotide)m = (deoxyribonucleotide)n+m + AMP + beta-nicotinamide D-nucleotide.</text>
        <dbReference type="EC" id="6.5.1.2"/>
    </reaction>
</comment>
<comment type="cofactor">
    <cofactor evidence="1">
        <name>Mg(2+)</name>
        <dbReference type="ChEBI" id="CHEBI:18420"/>
    </cofactor>
    <cofactor evidence="1">
        <name>Mn(2+)</name>
        <dbReference type="ChEBI" id="CHEBI:29035"/>
    </cofactor>
</comment>
<comment type="similarity">
    <text evidence="1">Belongs to the NAD-dependent DNA ligase family. LigA subfamily.</text>
</comment>
<name>DNLJ_CLASE</name>
<gene>
    <name evidence="1" type="primary">ligA</name>
    <name type="ordered locus">CMS1049</name>
</gene>
<accession>B0RGA7</accession>
<proteinExistence type="inferred from homology"/>
<protein>
    <recommendedName>
        <fullName evidence="1">DNA ligase</fullName>
        <ecNumber evidence="1">6.5.1.2</ecNumber>
    </recommendedName>
    <alternativeName>
        <fullName evidence="1">Polydeoxyribonucleotide synthase [NAD(+)]</fullName>
    </alternativeName>
</protein>
<organism>
    <name type="scientific">Clavibacter sepedonicus</name>
    <name type="common">Clavibacter michiganensis subsp. sepedonicus</name>
    <dbReference type="NCBI Taxonomy" id="31964"/>
    <lineage>
        <taxon>Bacteria</taxon>
        <taxon>Bacillati</taxon>
        <taxon>Actinomycetota</taxon>
        <taxon>Actinomycetes</taxon>
        <taxon>Micrococcales</taxon>
        <taxon>Microbacteriaceae</taxon>
        <taxon>Clavibacter</taxon>
    </lineage>
</organism>
<sequence>MSDTTTGSDAADAAVPATTPADLEAASARVDELRAEIERHRDAYYGETGGTVSDAEYDALERELRAIEDAHPTLRSQDSPTQTVGGRAETTLFAPVTHAERMLSLDNVFSEEELAEWAAKVERDAGRGRVRYLSELKIDGLAINLRYEHGVLVTAATRGDGVVGEDVTQNVLTMGTVPERLAGSGHPPLVEVRGEIFFPVAEFDELNARQLEVGERVFANPRNAAAGSLRQKEEGKSPARLELMHARIRRLRMLVHGIGAWPVRELERDAHVSAQSEVYGLLEAWGLPISTHFRVFDDIAEVAGFVRRQGADRAAVEHQIDGIVVKVDDLGLHEELGATSRAPRWATAYKYPPEEVNTTLLDIVVSVGRTGRATPFAVMEKVEVAGSEVRQATLHNQQVVKAKGVLIGDTVVLRKAGDVIPEVLGPVVELRTGKEHEFVMPTLCPECQTPLKPAKEGDIDLRCPNARSCPAQVRGRVEHVASRGALDIEGLGEVAAAALTQPLEPEDPPLETEAGLFELTMADLVPITVVVRDAETGMVKVDEKTGEAKRVTPFRRKRVLKRDGAFDPAEPWGDEASVPSKSAEVLLENLEKAKTQDLWRILVALSIRHVGPVAARALAGWFGSLDVIRAASREELAAVDGVGGIIADALLDWFEVDWHREIVARWEKAGVVTAVPGHPGPGAAAAAGGVLAGLAVVATGSLEGYTREGALEAIMAAGGKAGSSVSKKTHYVAAGPGAGSKLGKAEALGVRIIDAAEFRLLVEQGPDAIALPEADPVPDAAETAPDGGSAEDATAATAGAAEAATAEAKPKRARKRKAPAAAAAAPPTDVEAGTAVHAEPDGPAETP</sequence>
<dbReference type="EC" id="6.5.1.2" evidence="1"/>
<dbReference type="EMBL" id="AM849034">
    <property type="protein sequence ID" value="CAQ01163.1"/>
    <property type="molecule type" value="Genomic_DNA"/>
</dbReference>
<dbReference type="RefSeq" id="WP_012298452.1">
    <property type="nucleotide sequence ID" value="NZ_MZMN01000003.1"/>
</dbReference>
<dbReference type="SMR" id="B0RGA7"/>
<dbReference type="STRING" id="31964.CMS1049"/>
<dbReference type="KEGG" id="cms:CMS1049"/>
<dbReference type="eggNOG" id="COG0272">
    <property type="taxonomic scope" value="Bacteria"/>
</dbReference>
<dbReference type="HOGENOM" id="CLU_007764_2_1_11"/>
<dbReference type="OrthoDB" id="9759736at2"/>
<dbReference type="Proteomes" id="UP000001318">
    <property type="component" value="Chromosome"/>
</dbReference>
<dbReference type="GO" id="GO:0005829">
    <property type="term" value="C:cytosol"/>
    <property type="evidence" value="ECO:0007669"/>
    <property type="project" value="TreeGrafter"/>
</dbReference>
<dbReference type="GO" id="GO:0003911">
    <property type="term" value="F:DNA ligase (NAD+) activity"/>
    <property type="evidence" value="ECO:0007669"/>
    <property type="project" value="UniProtKB-UniRule"/>
</dbReference>
<dbReference type="GO" id="GO:0046872">
    <property type="term" value="F:metal ion binding"/>
    <property type="evidence" value="ECO:0007669"/>
    <property type="project" value="UniProtKB-KW"/>
</dbReference>
<dbReference type="GO" id="GO:0006281">
    <property type="term" value="P:DNA repair"/>
    <property type="evidence" value="ECO:0007669"/>
    <property type="project" value="UniProtKB-KW"/>
</dbReference>
<dbReference type="GO" id="GO:0006260">
    <property type="term" value="P:DNA replication"/>
    <property type="evidence" value="ECO:0007669"/>
    <property type="project" value="UniProtKB-KW"/>
</dbReference>
<dbReference type="CDD" id="cd17748">
    <property type="entry name" value="BRCT_DNA_ligase_like"/>
    <property type="match status" value="1"/>
</dbReference>
<dbReference type="CDD" id="cd00114">
    <property type="entry name" value="LIGANc"/>
    <property type="match status" value="1"/>
</dbReference>
<dbReference type="FunFam" id="1.10.150.20:FF:000006">
    <property type="entry name" value="DNA ligase"/>
    <property type="match status" value="1"/>
</dbReference>
<dbReference type="FunFam" id="2.40.50.140:FF:000012">
    <property type="entry name" value="DNA ligase"/>
    <property type="match status" value="1"/>
</dbReference>
<dbReference type="Gene3D" id="6.20.10.30">
    <property type="match status" value="1"/>
</dbReference>
<dbReference type="Gene3D" id="1.10.150.20">
    <property type="entry name" value="5' to 3' exonuclease, C-terminal subdomain"/>
    <property type="match status" value="2"/>
</dbReference>
<dbReference type="Gene3D" id="3.40.50.10190">
    <property type="entry name" value="BRCT domain"/>
    <property type="match status" value="1"/>
</dbReference>
<dbReference type="Gene3D" id="3.30.470.30">
    <property type="entry name" value="DNA ligase/mRNA capping enzyme"/>
    <property type="match status" value="1"/>
</dbReference>
<dbReference type="Gene3D" id="1.10.287.610">
    <property type="entry name" value="Helix hairpin bin"/>
    <property type="match status" value="1"/>
</dbReference>
<dbReference type="Gene3D" id="2.40.50.140">
    <property type="entry name" value="Nucleic acid-binding proteins"/>
    <property type="match status" value="1"/>
</dbReference>
<dbReference type="HAMAP" id="MF_01588">
    <property type="entry name" value="DNA_ligase_A"/>
    <property type="match status" value="1"/>
</dbReference>
<dbReference type="InterPro" id="IPR001357">
    <property type="entry name" value="BRCT_dom"/>
</dbReference>
<dbReference type="InterPro" id="IPR036420">
    <property type="entry name" value="BRCT_dom_sf"/>
</dbReference>
<dbReference type="InterPro" id="IPR041663">
    <property type="entry name" value="DisA/LigA_HHH"/>
</dbReference>
<dbReference type="InterPro" id="IPR001679">
    <property type="entry name" value="DNA_ligase"/>
</dbReference>
<dbReference type="InterPro" id="IPR018239">
    <property type="entry name" value="DNA_ligase_AS"/>
</dbReference>
<dbReference type="InterPro" id="IPR013839">
    <property type="entry name" value="DNAligase_adenylation"/>
</dbReference>
<dbReference type="InterPro" id="IPR013840">
    <property type="entry name" value="DNAligase_N"/>
</dbReference>
<dbReference type="InterPro" id="IPR012340">
    <property type="entry name" value="NA-bd_OB-fold"/>
</dbReference>
<dbReference type="InterPro" id="IPR004150">
    <property type="entry name" value="NAD_DNA_ligase_OB"/>
</dbReference>
<dbReference type="InterPro" id="IPR010994">
    <property type="entry name" value="RuvA_2-like"/>
</dbReference>
<dbReference type="InterPro" id="IPR004149">
    <property type="entry name" value="Znf_DNAligase_C4"/>
</dbReference>
<dbReference type="NCBIfam" id="TIGR00575">
    <property type="entry name" value="dnlj"/>
    <property type="match status" value="1"/>
</dbReference>
<dbReference type="NCBIfam" id="NF005932">
    <property type="entry name" value="PRK07956.1"/>
    <property type="match status" value="1"/>
</dbReference>
<dbReference type="PANTHER" id="PTHR23389">
    <property type="entry name" value="CHROMOSOME TRANSMISSION FIDELITY FACTOR 18"/>
    <property type="match status" value="1"/>
</dbReference>
<dbReference type="PANTHER" id="PTHR23389:SF9">
    <property type="entry name" value="DNA LIGASE"/>
    <property type="match status" value="1"/>
</dbReference>
<dbReference type="Pfam" id="PF00533">
    <property type="entry name" value="BRCT"/>
    <property type="match status" value="1"/>
</dbReference>
<dbReference type="Pfam" id="PF01653">
    <property type="entry name" value="DNA_ligase_aden"/>
    <property type="match status" value="1"/>
</dbReference>
<dbReference type="Pfam" id="PF03120">
    <property type="entry name" value="DNA_ligase_OB"/>
    <property type="match status" value="1"/>
</dbReference>
<dbReference type="Pfam" id="PF03119">
    <property type="entry name" value="DNA_ligase_ZBD"/>
    <property type="match status" value="1"/>
</dbReference>
<dbReference type="Pfam" id="PF12826">
    <property type="entry name" value="HHH_2"/>
    <property type="match status" value="1"/>
</dbReference>
<dbReference type="SMART" id="SM00532">
    <property type="entry name" value="LIGANc"/>
    <property type="match status" value="1"/>
</dbReference>
<dbReference type="SUPFAM" id="SSF52113">
    <property type="entry name" value="BRCT domain"/>
    <property type="match status" value="1"/>
</dbReference>
<dbReference type="SUPFAM" id="SSF56091">
    <property type="entry name" value="DNA ligase/mRNA capping enzyme, catalytic domain"/>
    <property type="match status" value="1"/>
</dbReference>
<dbReference type="SUPFAM" id="SSF50249">
    <property type="entry name" value="Nucleic acid-binding proteins"/>
    <property type="match status" value="1"/>
</dbReference>
<dbReference type="SUPFAM" id="SSF47781">
    <property type="entry name" value="RuvA domain 2-like"/>
    <property type="match status" value="1"/>
</dbReference>
<dbReference type="PROSITE" id="PS50172">
    <property type="entry name" value="BRCT"/>
    <property type="match status" value="1"/>
</dbReference>
<dbReference type="PROSITE" id="PS01055">
    <property type="entry name" value="DNA_LIGASE_N1"/>
    <property type="match status" value="1"/>
</dbReference>